<reference key="1">
    <citation type="journal article" date="2001" name="DNA Res.">
        <title>Complete genome sequence of an aerobic thermoacidophilic Crenarchaeon, Sulfolobus tokodaii strain7.</title>
        <authorList>
            <person name="Kawarabayasi Y."/>
            <person name="Hino Y."/>
            <person name="Horikawa H."/>
            <person name="Jin-no K."/>
            <person name="Takahashi M."/>
            <person name="Sekine M."/>
            <person name="Baba S."/>
            <person name="Ankai A."/>
            <person name="Kosugi H."/>
            <person name="Hosoyama A."/>
            <person name="Fukui S."/>
            <person name="Nagai Y."/>
            <person name="Nishijima K."/>
            <person name="Otsuka R."/>
            <person name="Nakazawa H."/>
            <person name="Takamiya M."/>
            <person name="Kato Y."/>
            <person name="Yoshizawa T."/>
            <person name="Tanaka T."/>
            <person name="Kudoh Y."/>
            <person name="Yamazaki J."/>
            <person name="Kushida N."/>
            <person name="Oguchi A."/>
            <person name="Aoki K."/>
            <person name="Masuda S."/>
            <person name="Yanagii M."/>
            <person name="Nishimura M."/>
            <person name="Yamagishi A."/>
            <person name="Oshima T."/>
            <person name="Kikuchi H."/>
        </authorList>
    </citation>
    <scope>NUCLEOTIDE SEQUENCE [LARGE SCALE GENOMIC DNA]</scope>
    <source>
        <strain>DSM 16993 / JCM 10545 / NBRC 100140 / 7</strain>
    </source>
</reference>
<protein>
    <recommendedName>
        <fullName evidence="1">Ribosomal RNA small subunit methyltransferase Nep1</fullName>
        <ecNumber evidence="1">2.1.1.-</ecNumber>
    </recommendedName>
    <alternativeName>
        <fullName evidence="1">16S rRNA (pseudouridine-N1-)-methyltransferase Nep1</fullName>
    </alternativeName>
</protein>
<evidence type="ECO:0000255" key="1">
    <source>
        <dbReference type="HAMAP-Rule" id="MF_00554"/>
    </source>
</evidence>
<evidence type="ECO:0000305" key="2"/>
<dbReference type="EC" id="2.1.1.-" evidence="1"/>
<dbReference type="EMBL" id="BA000023">
    <property type="protein sequence ID" value="BAB67233.1"/>
    <property type="molecule type" value="Genomic_DNA"/>
</dbReference>
<dbReference type="RefSeq" id="WP_010980208.1">
    <property type="nucleotide sequence ID" value="NC_003106.2"/>
</dbReference>
<dbReference type="SMR" id="Q96YP4"/>
<dbReference type="STRING" id="273063.STK_21290"/>
<dbReference type="GeneID" id="1460201"/>
<dbReference type="KEGG" id="sto:STK_21290"/>
<dbReference type="PATRIC" id="fig|273063.9.peg.2422"/>
<dbReference type="eggNOG" id="arCOG04122">
    <property type="taxonomic scope" value="Archaea"/>
</dbReference>
<dbReference type="OrthoDB" id="7612at2157"/>
<dbReference type="Proteomes" id="UP000001015">
    <property type="component" value="Chromosome"/>
</dbReference>
<dbReference type="GO" id="GO:0070037">
    <property type="term" value="F:rRNA (pseudouridine) methyltransferase activity"/>
    <property type="evidence" value="ECO:0007669"/>
    <property type="project" value="UniProtKB-UniRule"/>
</dbReference>
<dbReference type="GO" id="GO:0019843">
    <property type="term" value="F:rRNA binding"/>
    <property type="evidence" value="ECO:0007669"/>
    <property type="project" value="UniProtKB-UniRule"/>
</dbReference>
<dbReference type="GO" id="GO:0070475">
    <property type="term" value="P:rRNA base methylation"/>
    <property type="evidence" value="ECO:0007669"/>
    <property type="project" value="InterPro"/>
</dbReference>
<dbReference type="CDD" id="cd18088">
    <property type="entry name" value="Nep1-like"/>
    <property type="match status" value="1"/>
</dbReference>
<dbReference type="Gene3D" id="3.40.1280.10">
    <property type="match status" value="1"/>
</dbReference>
<dbReference type="HAMAP" id="MF_00554">
    <property type="entry name" value="NEP1"/>
    <property type="match status" value="1"/>
</dbReference>
<dbReference type="InterPro" id="IPR029028">
    <property type="entry name" value="Alpha/beta_knot_MTases"/>
</dbReference>
<dbReference type="InterPro" id="IPR005304">
    <property type="entry name" value="Rbsml_bgen_MeTrfase_EMG1/NEP1"/>
</dbReference>
<dbReference type="InterPro" id="IPR023503">
    <property type="entry name" value="Ribosome_NEP1_arc"/>
</dbReference>
<dbReference type="InterPro" id="IPR029026">
    <property type="entry name" value="tRNA_m1G_MTases_N"/>
</dbReference>
<dbReference type="NCBIfam" id="NF003203">
    <property type="entry name" value="PRK04171.1-1"/>
    <property type="match status" value="1"/>
</dbReference>
<dbReference type="PANTHER" id="PTHR12636">
    <property type="entry name" value="NEP1/MRA1"/>
    <property type="match status" value="1"/>
</dbReference>
<dbReference type="PANTHER" id="PTHR12636:SF5">
    <property type="entry name" value="RIBOSOMAL RNA SMALL SUBUNIT METHYLTRANSFERASE NEP1"/>
    <property type="match status" value="1"/>
</dbReference>
<dbReference type="Pfam" id="PF03587">
    <property type="entry name" value="EMG1"/>
    <property type="match status" value="1"/>
</dbReference>
<dbReference type="SUPFAM" id="SSF75217">
    <property type="entry name" value="alpha/beta knot"/>
    <property type="match status" value="1"/>
</dbReference>
<accession>Q96YP4</accession>
<gene>
    <name type="primary">nep1</name>
    <name type="ordered locus">STK_21290</name>
</gene>
<proteinExistence type="inferred from homology"/>
<sequence>MKINLILLDSSLELVPKEIASHPAVIRNARKRNKKPEHTILDISLHYHAMKNLPNWRKRGRPDIVHLALLMFLTEKVPIKGEVYIHTIDGKIIYVNSDMRPPKNYNRFIGLAEQLLLHGQVPINDANPLMKILNIKLTDLKSKYKIGVLSEDGKKVKPEELCNLGENWLLGVGAFPHGDFSEEIKGVADEYFSISNYKLETHQVICRIISACLQQLGWP</sequence>
<comment type="function">
    <text evidence="1">Methyltransferase involved in ribosomal biogenesis. Specifically catalyzes the N1-methylation of the pseudouridine corresponding to position 914 in M.jannaschii 16S rRNA.</text>
</comment>
<comment type="catalytic activity">
    <reaction evidence="1">
        <text>a pseudouridine in rRNA + S-adenosyl-L-methionine = an N(1)-methylpseudouridine in rRNA + S-adenosyl-L-homocysteine + H(+)</text>
        <dbReference type="Rhea" id="RHEA:46696"/>
        <dbReference type="Rhea" id="RHEA-COMP:11634"/>
        <dbReference type="Rhea" id="RHEA-COMP:13933"/>
        <dbReference type="ChEBI" id="CHEBI:15378"/>
        <dbReference type="ChEBI" id="CHEBI:57856"/>
        <dbReference type="ChEBI" id="CHEBI:59789"/>
        <dbReference type="ChEBI" id="CHEBI:65314"/>
        <dbReference type="ChEBI" id="CHEBI:74890"/>
    </reaction>
</comment>
<comment type="subunit">
    <text evidence="1">Homodimer.</text>
</comment>
<comment type="similarity">
    <text evidence="2">Belongs to the class IV-like SAM-binding methyltransferase superfamily. RNA methyltransferase NEP1 family.</text>
</comment>
<feature type="chain" id="PRO_0000158623" description="Ribosomal RNA small subunit methyltransferase Nep1">
    <location>
        <begin position="1"/>
        <end position="219"/>
    </location>
</feature>
<feature type="binding site" evidence="1">
    <location>
        <position position="173"/>
    </location>
    <ligand>
        <name>S-adenosyl-L-methionine</name>
        <dbReference type="ChEBI" id="CHEBI:59789"/>
    </ligand>
</feature>
<feature type="binding site" evidence="1">
    <location>
        <position position="178"/>
    </location>
    <ligand>
        <name>S-adenosyl-L-methionine</name>
        <dbReference type="ChEBI" id="CHEBI:59789"/>
    </ligand>
</feature>
<feature type="binding site" evidence="1">
    <location>
        <begin position="194"/>
        <end position="199"/>
    </location>
    <ligand>
        <name>S-adenosyl-L-methionine</name>
        <dbReference type="ChEBI" id="CHEBI:59789"/>
    </ligand>
</feature>
<feature type="site" description="Interaction with substrate rRNA" evidence="1">
    <location>
        <position position="61"/>
    </location>
</feature>
<feature type="site" description="Stabilizes Arg-61" evidence="1">
    <location>
        <position position="63"/>
    </location>
</feature>
<feature type="site" description="Interaction with substrate rRNA" evidence="1">
    <location>
        <position position="100"/>
    </location>
</feature>
<feature type="site" description="Interaction with substrate rRNA" evidence="1">
    <location>
        <position position="103"/>
    </location>
</feature>
<feature type="site" description="Interaction with substrate rRNA" evidence="1">
    <location>
        <position position="107"/>
    </location>
</feature>
<organism>
    <name type="scientific">Sulfurisphaera tokodaii (strain DSM 16993 / JCM 10545 / NBRC 100140 / 7)</name>
    <name type="common">Sulfolobus tokodaii</name>
    <dbReference type="NCBI Taxonomy" id="273063"/>
    <lineage>
        <taxon>Archaea</taxon>
        <taxon>Thermoproteota</taxon>
        <taxon>Thermoprotei</taxon>
        <taxon>Sulfolobales</taxon>
        <taxon>Sulfolobaceae</taxon>
        <taxon>Sulfurisphaera</taxon>
    </lineage>
</organism>
<name>NEP1_SULTO</name>
<keyword id="KW-0489">Methyltransferase</keyword>
<keyword id="KW-1185">Reference proteome</keyword>
<keyword id="KW-0690">Ribosome biogenesis</keyword>
<keyword id="KW-0694">RNA-binding</keyword>
<keyword id="KW-0698">rRNA processing</keyword>
<keyword id="KW-0699">rRNA-binding</keyword>
<keyword id="KW-0949">S-adenosyl-L-methionine</keyword>
<keyword id="KW-0808">Transferase</keyword>